<protein>
    <recommendedName>
        <fullName evidence="1">Heat-inducible transcription repressor HrcA</fullName>
    </recommendedName>
</protein>
<comment type="function">
    <text evidence="1">Negative regulator of class I heat shock genes (grpE-dnaK-dnaJ and groELS operons). Prevents heat-shock induction of these operons.</text>
</comment>
<comment type="similarity">
    <text evidence="1">Belongs to the HrcA family.</text>
</comment>
<sequence length="335" mass="38456">MPKLDSKKEKYLKQIVENFIKTGESIGSLNLKQSYGIKKSPSYLRAIMNQLEKEGFLEKSHSSSGRIPTLQGFQYYAEFLSFDENENLANKLKDLFARRRINIENTISEAVKLISESVGTTLIATTNNENERLMSINLTQISQNEGIIVVVSSSGNVENKKITFSEQIPRQDVKIAIRLFQERLINTPLLEISSKLAILKQELEKQIKHSDELLHHFMEKIFNFQVQNKSNIYNKNSLILDKEISRAKLVDLLYIIEKKSIWEMLEDRTTKDDDTLKISIKSPEVSFISKKFEKFLPIKEISMVGAAKKINYSAARTGIKLLEDFLSNKSKIRKG</sequence>
<feature type="chain" id="PRO_1000010426" description="Heat-inducible transcription repressor HrcA">
    <location>
        <begin position="1"/>
        <end position="335"/>
    </location>
</feature>
<reference key="1">
    <citation type="journal article" date="2005" name="J. Bacteriol.">
        <title>Swine and poultry pathogens: the complete genome sequences of two strains of Mycoplasma hyopneumoniae and a strain of Mycoplasma synoviae.</title>
        <authorList>
            <person name="Vasconcelos A.T.R."/>
            <person name="Ferreira H.B."/>
            <person name="Bizarro C.V."/>
            <person name="Bonatto S.L."/>
            <person name="Carvalho M.O."/>
            <person name="Pinto P.M."/>
            <person name="Almeida D.F."/>
            <person name="Almeida L.G.P."/>
            <person name="Almeida R."/>
            <person name="Alves-Junior L."/>
            <person name="Assuncao E.N."/>
            <person name="Azevedo V.A.C."/>
            <person name="Bogo M.R."/>
            <person name="Brigido M.M."/>
            <person name="Brocchi M."/>
            <person name="Burity H.A."/>
            <person name="Camargo A.A."/>
            <person name="Camargo S.S."/>
            <person name="Carepo M.S."/>
            <person name="Carraro D.M."/>
            <person name="de Mattos Cascardo J.C."/>
            <person name="Castro L.A."/>
            <person name="Cavalcanti G."/>
            <person name="Chemale G."/>
            <person name="Collevatti R.G."/>
            <person name="Cunha C.W."/>
            <person name="Dallagiovanna B."/>
            <person name="Dambros B.P."/>
            <person name="Dellagostin O.A."/>
            <person name="Falcao C."/>
            <person name="Fantinatti-Garboggini F."/>
            <person name="Felipe M.S.S."/>
            <person name="Fiorentin L."/>
            <person name="Franco G.R."/>
            <person name="Freitas N.S.A."/>
            <person name="Frias D."/>
            <person name="Grangeiro T.B."/>
            <person name="Grisard E.C."/>
            <person name="Guimaraes C.T."/>
            <person name="Hungria M."/>
            <person name="Jardim S.N."/>
            <person name="Krieger M.A."/>
            <person name="Laurino J.P."/>
            <person name="Lima L.F.A."/>
            <person name="Lopes M.I."/>
            <person name="Loreto E.L.S."/>
            <person name="Madeira H.M.F."/>
            <person name="Manfio G.P."/>
            <person name="Maranhao A.Q."/>
            <person name="Martinkovics C.T."/>
            <person name="Medeiros S.R.B."/>
            <person name="Moreira M.A.M."/>
            <person name="Neiva M."/>
            <person name="Ramalho-Neto C.E."/>
            <person name="Nicolas M.F."/>
            <person name="Oliveira S.C."/>
            <person name="Paixao R.F.C."/>
            <person name="Pedrosa F.O."/>
            <person name="Pena S.D.J."/>
            <person name="Pereira M."/>
            <person name="Pereira-Ferrari L."/>
            <person name="Piffer I."/>
            <person name="Pinto L.S."/>
            <person name="Potrich D.P."/>
            <person name="Salim A.C.M."/>
            <person name="Santos F.R."/>
            <person name="Schmitt R."/>
            <person name="Schneider M.P.C."/>
            <person name="Schrank A."/>
            <person name="Schrank I.S."/>
            <person name="Schuck A.F."/>
            <person name="Seuanez H.N."/>
            <person name="Silva D.W."/>
            <person name="Silva R."/>
            <person name="Silva S.C."/>
            <person name="Soares C.M.A."/>
            <person name="Souza K.R.L."/>
            <person name="Souza R.C."/>
            <person name="Staats C.C."/>
            <person name="Steffens M.B.R."/>
            <person name="Teixeira S.M.R."/>
            <person name="Urmenyi T.P."/>
            <person name="Vainstein M.H."/>
            <person name="Zuccherato L.W."/>
            <person name="Simpson A.J.G."/>
            <person name="Zaha A."/>
        </authorList>
    </citation>
    <scope>NUCLEOTIDE SEQUENCE [LARGE SCALE GENOMIC DNA]</scope>
    <source>
        <strain>J / ATCC 25934 / NCTC 10110</strain>
    </source>
</reference>
<accession>Q4AAT9</accession>
<dbReference type="EMBL" id="AE017243">
    <property type="protein sequence ID" value="AAZ44104.1"/>
    <property type="molecule type" value="Genomic_DNA"/>
</dbReference>
<dbReference type="RefSeq" id="WP_011205849.1">
    <property type="nucleotide sequence ID" value="NC_007295.1"/>
</dbReference>
<dbReference type="SMR" id="Q4AAT9"/>
<dbReference type="GeneID" id="41334297"/>
<dbReference type="KEGG" id="mhj:MHJ_0010"/>
<dbReference type="eggNOG" id="COG1420">
    <property type="taxonomic scope" value="Bacteria"/>
</dbReference>
<dbReference type="HOGENOM" id="CLU_050019_1_0_14"/>
<dbReference type="OrthoDB" id="9783139at2"/>
<dbReference type="Proteomes" id="UP000000548">
    <property type="component" value="Chromosome"/>
</dbReference>
<dbReference type="GO" id="GO:0003677">
    <property type="term" value="F:DNA binding"/>
    <property type="evidence" value="ECO:0007669"/>
    <property type="project" value="InterPro"/>
</dbReference>
<dbReference type="GO" id="GO:0045892">
    <property type="term" value="P:negative regulation of DNA-templated transcription"/>
    <property type="evidence" value="ECO:0007669"/>
    <property type="project" value="UniProtKB-UniRule"/>
</dbReference>
<dbReference type="Gene3D" id="1.10.10.10">
    <property type="entry name" value="Winged helix-like DNA-binding domain superfamily/Winged helix DNA-binding domain"/>
    <property type="match status" value="1"/>
</dbReference>
<dbReference type="HAMAP" id="MF_00081">
    <property type="entry name" value="HrcA"/>
    <property type="match status" value="1"/>
</dbReference>
<dbReference type="InterPro" id="IPR002571">
    <property type="entry name" value="HrcA"/>
</dbReference>
<dbReference type="InterPro" id="IPR021153">
    <property type="entry name" value="HrcA_C"/>
</dbReference>
<dbReference type="InterPro" id="IPR036388">
    <property type="entry name" value="WH-like_DNA-bd_sf"/>
</dbReference>
<dbReference type="InterPro" id="IPR036390">
    <property type="entry name" value="WH_DNA-bd_sf"/>
</dbReference>
<dbReference type="PANTHER" id="PTHR34824">
    <property type="entry name" value="HEAT-INDUCIBLE TRANSCRIPTION REPRESSOR HRCA"/>
    <property type="match status" value="1"/>
</dbReference>
<dbReference type="PANTHER" id="PTHR34824:SF1">
    <property type="entry name" value="HEAT-INDUCIBLE TRANSCRIPTION REPRESSOR HRCA"/>
    <property type="match status" value="1"/>
</dbReference>
<dbReference type="Pfam" id="PF01628">
    <property type="entry name" value="HrcA"/>
    <property type="match status" value="1"/>
</dbReference>
<dbReference type="PIRSF" id="PIRSF005485">
    <property type="entry name" value="HrcA"/>
    <property type="match status" value="1"/>
</dbReference>
<dbReference type="SUPFAM" id="SSF55781">
    <property type="entry name" value="GAF domain-like"/>
    <property type="match status" value="1"/>
</dbReference>
<dbReference type="SUPFAM" id="SSF46785">
    <property type="entry name" value="Winged helix' DNA-binding domain"/>
    <property type="match status" value="1"/>
</dbReference>
<name>HRCA_MESHJ</name>
<organism>
    <name type="scientific">Mesomycoplasma hyopneumoniae (strain J / ATCC 25934 / NCTC 10110)</name>
    <name type="common">Mycoplasma hyopneumoniae</name>
    <dbReference type="NCBI Taxonomy" id="262719"/>
    <lineage>
        <taxon>Bacteria</taxon>
        <taxon>Bacillati</taxon>
        <taxon>Mycoplasmatota</taxon>
        <taxon>Mycoplasmoidales</taxon>
        <taxon>Metamycoplasmataceae</taxon>
        <taxon>Mesomycoplasma</taxon>
    </lineage>
</organism>
<proteinExistence type="inferred from homology"/>
<evidence type="ECO:0000255" key="1">
    <source>
        <dbReference type="HAMAP-Rule" id="MF_00081"/>
    </source>
</evidence>
<keyword id="KW-0678">Repressor</keyword>
<keyword id="KW-0346">Stress response</keyword>
<keyword id="KW-0804">Transcription</keyword>
<keyword id="KW-0805">Transcription regulation</keyword>
<gene>
    <name evidence="1" type="primary">hrcA</name>
    <name type="ordered locus">MHJ_0010</name>
</gene>